<organism>
    <name type="scientific">Homo sapiens</name>
    <name type="common">Human</name>
    <dbReference type="NCBI Taxonomy" id="9606"/>
    <lineage>
        <taxon>Eukaryota</taxon>
        <taxon>Metazoa</taxon>
        <taxon>Chordata</taxon>
        <taxon>Craniata</taxon>
        <taxon>Vertebrata</taxon>
        <taxon>Euteleostomi</taxon>
        <taxon>Mammalia</taxon>
        <taxon>Eutheria</taxon>
        <taxon>Euarchontoglires</taxon>
        <taxon>Primates</taxon>
        <taxon>Haplorrhini</taxon>
        <taxon>Catarrhini</taxon>
        <taxon>Hominidae</taxon>
        <taxon>Homo</taxon>
    </lineage>
</organism>
<dbReference type="EC" id="3.1.1.79" evidence="9 13 15"/>
<dbReference type="EC" id="3.1.1.23" evidence="3"/>
<dbReference type="EMBL" id="L11706">
    <property type="protein sequence ID" value="AAA69810.1"/>
    <property type="molecule type" value="Genomic_DNA"/>
</dbReference>
<dbReference type="EMBL" id="U40001">
    <property type="protein sequence ID" value="AAC50666.1"/>
    <property type="molecule type" value="mRNA"/>
</dbReference>
<dbReference type="EMBL" id="DQ188033">
    <property type="protein sequence ID" value="ABA03168.1"/>
    <property type="molecule type" value="Genomic_DNA"/>
</dbReference>
<dbReference type="EMBL" id="BC070041">
    <property type="protein sequence ID" value="AAH70041.1"/>
    <property type="molecule type" value="mRNA"/>
</dbReference>
<dbReference type="CCDS" id="CCDS12607.1">
    <molecule id="Q05469-1"/>
</dbReference>
<dbReference type="RefSeq" id="NP_001403032.1">
    <molecule id="Q05469-2"/>
    <property type="nucleotide sequence ID" value="NM_001416103.1"/>
</dbReference>
<dbReference type="RefSeq" id="NP_001403033.1">
    <molecule id="Q05469-2"/>
    <property type="nucleotide sequence ID" value="NM_001416104.1"/>
</dbReference>
<dbReference type="RefSeq" id="NP_005348.2">
    <molecule id="Q05469-1"/>
    <property type="nucleotide sequence ID" value="NM_005357.3"/>
</dbReference>
<dbReference type="RefSeq" id="XP_005258997.1">
    <property type="nucleotide sequence ID" value="XM_005258940.3"/>
</dbReference>
<dbReference type="RefSeq" id="XP_006723281.1">
    <molecule id="Q05469-2"/>
    <property type="nucleotide sequence ID" value="XM_006723218.4"/>
</dbReference>
<dbReference type="RefSeq" id="XP_016882299.1">
    <property type="nucleotide sequence ID" value="XM_017026810.1"/>
</dbReference>
<dbReference type="RefSeq" id="XP_047294791.1">
    <molecule id="Q05469-2"/>
    <property type="nucleotide sequence ID" value="XM_047438835.1"/>
</dbReference>
<dbReference type="RefSeq" id="XP_054176998.1">
    <molecule id="Q05469-2"/>
    <property type="nucleotide sequence ID" value="XM_054321023.1"/>
</dbReference>
<dbReference type="RefSeq" id="XP_054176999.1">
    <molecule id="Q05469-2"/>
    <property type="nucleotide sequence ID" value="XM_054321024.1"/>
</dbReference>
<dbReference type="BioGRID" id="110179">
    <property type="interactions" value="12"/>
</dbReference>
<dbReference type="FunCoup" id="Q05469">
    <property type="interactions" value="976"/>
</dbReference>
<dbReference type="IntAct" id="Q05469">
    <property type="interactions" value="5"/>
</dbReference>
<dbReference type="STRING" id="9606.ENSP00000244289"/>
<dbReference type="BindingDB" id="Q05469"/>
<dbReference type="ChEMBL" id="CHEMBL3590"/>
<dbReference type="DrugBank" id="DB00676">
    <property type="generic name" value="Benzyl benzoate"/>
</dbReference>
<dbReference type="DrugBank" id="DB01428">
    <property type="generic name" value="Oxybenzone"/>
</dbReference>
<dbReference type="GuidetoPHARMACOLOGY" id="2593"/>
<dbReference type="SwissLipids" id="SLP:000000316"/>
<dbReference type="ESTHER" id="human-LIPE">
    <property type="family name" value="Hormone-sensitive_lipase_like"/>
</dbReference>
<dbReference type="MEROPS" id="S09.993"/>
<dbReference type="iPTMnet" id="Q05469"/>
<dbReference type="PhosphoSitePlus" id="Q05469"/>
<dbReference type="SwissPalm" id="Q05469"/>
<dbReference type="BioMuta" id="LIPE"/>
<dbReference type="DMDM" id="145559491"/>
<dbReference type="jPOST" id="Q05469"/>
<dbReference type="MassIVE" id="Q05469"/>
<dbReference type="PaxDb" id="9606-ENSP00000244289"/>
<dbReference type="PeptideAtlas" id="Q05469"/>
<dbReference type="ProteomicsDB" id="58326">
    <molecule id="Q05469-1"/>
</dbReference>
<dbReference type="ProteomicsDB" id="58327">
    <molecule id="Q05469-2"/>
</dbReference>
<dbReference type="Pumba" id="Q05469"/>
<dbReference type="Antibodypedia" id="4327">
    <property type="antibodies" value="474 antibodies from 38 providers"/>
</dbReference>
<dbReference type="DNASU" id="3991"/>
<dbReference type="Ensembl" id="ENST00000244289.9">
    <molecule id="Q05469-1"/>
    <property type="protein sequence ID" value="ENSP00000244289.3"/>
    <property type="gene ID" value="ENSG00000079435.11"/>
</dbReference>
<dbReference type="GeneID" id="3991"/>
<dbReference type="KEGG" id="hsa:3991"/>
<dbReference type="MANE-Select" id="ENST00000244289.9">
    <property type="protein sequence ID" value="ENSP00000244289.3"/>
    <property type="RefSeq nucleotide sequence ID" value="NM_005357.4"/>
    <property type="RefSeq protein sequence ID" value="NP_005348.2"/>
</dbReference>
<dbReference type="UCSC" id="uc002otr.4">
    <molecule id="Q05469-1"/>
    <property type="organism name" value="human"/>
</dbReference>
<dbReference type="AGR" id="HGNC:6621"/>
<dbReference type="CTD" id="3991"/>
<dbReference type="DisGeNET" id="3991"/>
<dbReference type="GeneCards" id="LIPE"/>
<dbReference type="HGNC" id="HGNC:6621">
    <property type="gene designation" value="LIPE"/>
</dbReference>
<dbReference type="HPA" id="ENSG00000079435">
    <property type="expression patterns" value="Group enriched (adipose tissue, breast)"/>
</dbReference>
<dbReference type="MalaCards" id="LIPE"/>
<dbReference type="MIM" id="151750">
    <property type="type" value="gene"/>
</dbReference>
<dbReference type="MIM" id="615980">
    <property type="type" value="phenotype"/>
</dbReference>
<dbReference type="neXtProt" id="NX_Q05469"/>
<dbReference type="OpenTargets" id="ENSG00000079435"/>
<dbReference type="Orphanet" id="435660">
    <property type="disease" value="LIPE-related familial partial lipodystrophy"/>
</dbReference>
<dbReference type="PharmGKB" id="PA30393"/>
<dbReference type="VEuPathDB" id="HostDB:ENSG00000079435"/>
<dbReference type="eggNOG" id="KOG4388">
    <property type="taxonomic scope" value="Eukaryota"/>
</dbReference>
<dbReference type="GeneTree" id="ENSGT00730000111056"/>
<dbReference type="HOGENOM" id="CLU_010288_0_0_1"/>
<dbReference type="InParanoid" id="Q05469"/>
<dbReference type="OMA" id="FAACQDH"/>
<dbReference type="OrthoDB" id="408631at2759"/>
<dbReference type="PAN-GO" id="Q05469">
    <property type="GO annotations" value="4 GO annotations based on evolutionary models"/>
</dbReference>
<dbReference type="PhylomeDB" id="Q05469"/>
<dbReference type="TreeFam" id="TF314423"/>
<dbReference type="BioCyc" id="MetaCyc:HS01328-MONOMER"/>
<dbReference type="BRENDA" id="3.1.1.79">
    <property type="organism ID" value="2681"/>
</dbReference>
<dbReference type="PathwayCommons" id="Q05469"/>
<dbReference type="Reactome" id="R-HSA-163560">
    <property type="pathway name" value="Triglyceride catabolism"/>
</dbReference>
<dbReference type="Reactome" id="R-HSA-9841922">
    <property type="pathway name" value="MLL4 and MLL3 complexes regulate expression of PPARG target genes in adipogenesis and hepatic steatosis"/>
</dbReference>
<dbReference type="SABIO-RK" id="Q05469"/>
<dbReference type="SignaLink" id="Q05469"/>
<dbReference type="SIGNOR" id="Q05469"/>
<dbReference type="UniPathway" id="UPA00256"/>
<dbReference type="BioGRID-ORCS" id="3991">
    <property type="hits" value="18 hits in 1154 CRISPR screens"/>
</dbReference>
<dbReference type="CD-CODE" id="FB4E32DD">
    <property type="entry name" value="Presynaptic clusters and postsynaptic densities"/>
</dbReference>
<dbReference type="ChiTaRS" id="LIPE">
    <property type="organism name" value="human"/>
</dbReference>
<dbReference type="GeneWiki" id="Hormone-sensitive_lipase"/>
<dbReference type="GenomeRNAi" id="3991"/>
<dbReference type="Pharos" id="Q05469">
    <property type="development level" value="Tchem"/>
</dbReference>
<dbReference type="PRO" id="PR:Q05469"/>
<dbReference type="Proteomes" id="UP000005640">
    <property type="component" value="Chromosome 19"/>
</dbReference>
<dbReference type="RNAct" id="Q05469">
    <property type="molecule type" value="protein"/>
</dbReference>
<dbReference type="Bgee" id="ENSG00000079435">
    <property type="expression patterns" value="Expressed in omental fat pad and 131 other cell types or tissues"/>
</dbReference>
<dbReference type="ExpressionAtlas" id="Q05469">
    <property type="expression patterns" value="baseline and differential"/>
</dbReference>
<dbReference type="GO" id="GO:0005901">
    <property type="term" value="C:caveola"/>
    <property type="evidence" value="ECO:0007669"/>
    <property type="project" value="UniProtKB-SubCell"/>
</dbReference>
<dbReference type="GO" id="GO:0005829">
    <property type="term" value="C:cytosol"/>
    <property type="evidence" value="ECO:0000314"/>
    <property type="project" value="HPA"/>
</dbReference>
<dbReference type="GO" id="GO:0005811">
    <property type="term" value="C:lipid droplet"/>
    <property type="evidence" value="ECO:0000250"/>
    <property type="project" value="UniProtKB"/>
</dbReference>
<dbReference type="GO" id="GO:0016020">
    <property type="term" value="C:membrane"/>
    <property type="evidence" value="ECO:0000250"/>
    <property type="project" value="UniProtKB"/>
</dbReference>
<dbReference type="GO" id="GO:0047376">
    <property type="term" value="F:all-trans-retinyl-palmitate hydrolase, all-trans-retinol forming activity"/>
    <property type="evidence" value="ECO:0007669"/>
    <property type="project" value="RHEA"/>
</dbReference>
<dbReference type="GO" id="GO:0120516">
    <property type="term" value="F:diacylglycerol lipase activity"/>
    <property type="evidence" value="ECO:0000314"/>
    <property type="project" value="UniProtKB"/>
</dbReference>
<dbReference type="GO" id="GO:0047372">
    <property type="term" value="F:monoacylglycerol lipase activity"/>
    <property type="evidence" value="ECO:0000250"/>
    <property type="project" value="UniProtKB"/>
</dbReference>
<dbReference type="GO" id="GO:0050253">
    <property type="term" value="F:retinyl-palmitate esterase activity"/>
    <property type="evidence" value="ECO:0000314"/>
    <property type="project" value="UniProtKB"/>
</dbReference>
<dbReference type="GO" id="GO:0004771">
    <property type="term" value="F:sterol ester esterase activity"/>
    <property type="evidence" value="ECO:0000314"/>
    <property type="project" value="UniProtKB"/>
</dbReference>
<dbReference type="GO" id="GO:0004806">
    <property type="term" value="F:triacylglycerol lipase activity"/>
    <property type="evidence" value="ECO:0000314"/>
    <property type="project" value="UniProtKB"/>
</dbReference>
<dbReference type="GO" id="GO:0008203">
    <property type="term" value="P:cholesterol metabolic process"/>
    <property type="evidence" value="ECO:0007669"/>
    <property type="project" value="UniProtKB-KW"/>
</dbReference>
<dbReference type="GO" id="GO:0046340">
    <property type="term" value="P:diacylglycerol catabolic process"/>
    <property type="evidence" value="ECO:0000250"/>
    <property type="project" value="UniProtKB"/>
</dbReference>
<dbReference type="GO" id="GO:0046485">
    <property type="term" value="P:ether lipid metabolic process"/>
    <property type="evidence" value="ECO:0000250"/>
    <property type="project" value="UniProtKB"/>
</dbReference>
<dbReference type="GO" id="GO:0016042">
    <property type="term" value="P:lipid catabolic process"/>
    <property type="evidence" value="ECO:0000250"/>
    <property type="project" value="UniProtKB"/>
</dbReference>
<dbReference type="GO" id="GO:0006468">
    <property type="term" value="P:protein phosphorylation"/>
    <property type="evidence" value="ECO:0000304"/>
    <property type="project" value="ProtInc"/>
</dbReference>
<dbReference type="GO" id="GO:0019433">
    <property type="term" value="P:triglyceride catabolic process"/>
    <property type="evidence" value="ECO:0000318"/>
    <property type="project" value="GO_Central"/>
</dbReference>
<dbReference type="FunFam" id="3.40.50.1820:FF:000110">
    <property type="entry name" value="Hormone-sensitive lipase"/>
    <property type="match status" value="1"/>
</dbReference>
<dbReference type="FunFam" id="3.40.50.1820:FF:000199">
    <property type="entry name" value="Hormone-sensitive lipase"/>
    <property type="match status" value="1"/>
</dbReference>
<dbReference type="Gene3D" id="3.40.50.1820">
    <property type="entry name" value="alpha/beta hydrolase"/>
    <property type="match status" value="2"/>
</dbReference>
<dbReference type="InterPro" id="IPR013094">
    <property type="entry name" value="AB_hydrolase_3"/>
</dbReference>
<dbReference type="InterPro" id="IPR029058">
    <property type="entry name" value="AB_hydrolase_fold"/>
</dbReference>
<dbReference type="InterPro" id="IPR010468">
    <property type="entry name" value="HSL_N"/>
</dbReference>
<dbReference type="InterPro" id="IPR002168">
    <property type="entry name" value="Lipase_GDXG_HIS_AS"/>
</dbReference>
<dbReference type="InterPro" id="IPR033140">
    <property type="entry name" value="Lipase_GDXG_put_SER_AS"/>
</dbReference>
<dbReference type="PANTHER" id="PTHR23025:SF3">
    <property type="entry name" value="HORMONE-SENSITIVE LIPASE"/>
    <property type="match status" value="1"/>
</dbReference>
<dbReference type="PANTHER" id="PTHR23025">
    <property type="entry name" value="TRIACYLGLYCEROL LIPASE"/>
    <property type="match status" value="1"/>
</dbReference>
<dbReference type="Pfam" id="PF07859">
    <property type="entry name" value="Abhydrolase_3"/>
    <property type="match status" value="2"/>
</dbReference>
<dbReference type="Pfam" id="PF06350">
    <property type="entry name" value="HSL_N"/>
    <property type="match status" value="1"/>
</dbReference>
<dbReference type="SUPFAM" id="SSF53474">
    <property type="entry name" value="alpha/beta-Hydrolases"/>
    <property type="match status" value="1"/>
</dbReference>
<dbReference type="PROSITE" id="PS01173">
    <property type="entry name" value="LIPASE_GDXG_HIS"/>
    <property type="match status" value="1"/>
</dbReference>
<dbReference type="PROSITE" id="PS01174">
    <property type="entry name" value="LIPASE_GDXG_SER"/>
    <property type="match status" value="1"/>
</dbReference>
<sequence length="1076" mass="116598">MEPGSKSVSRSDWQPEPHQRPITPLEPGPEKTPIAQPESKTLQGSNTQQKPASNQRPLTQQETPAQHDAESQKEPRAQQKSASQEEFLAPQKPAPQQSPYIQRVLLTQQEAASQQGPGLGKESITQQEPALRQRHVAQPGPGPGEPPPAQQEAESTPAAQAKPGAKREPSAPTESTSQETPEQSDKQTTPVQGAKSKQGSLTELGFLTKLQELSIQRSALEWKALSEWVTDSESESDVGSSSDTDSPATMGGMVAQGVKLGFKGKSGYKVMSGYSGTSPHEKTSARNHRHYQDTASRLIHNMDLRTMTQSLVTLAEDNIAFFSSQGPGETAQRLSGVFAGVREQALGLEPALGRLLGVAHLFDLDPETPANGYRSLVHTARCCLAHLLHKSRYVASNRRSIFFRTSHNLAELEAYLAALTQLRALVYYAQRLLVTNRPGVLFFEGDEGLTADFLREYVTLHKGCFYGRCLGFQFTPAIRPFLQTISIGLVSFGEHYKRNETGLSVAASSLFTSGRFAIDPELRGAEFERITQNLDVHFWKAFWNITEMEVLSSLANMASATVRVSRLLSLPPEAFEMPLTADPTLTVTISPPLAHTGPGPVLVRLISYDLREGQDSEELSSLIKSNGQRSLELWPRPQQAPRSRSLIVHFHGGGFVAQTSRSHEPYLKSWAQELGAPIISIDYSLAPEAPFPRALEECFFAYCWAIKHCALLGSTGERICLAGDSAGGNLCFTVALRAAAYGVRVPDGIMAAYPATMLQPAASPSRLLSLMDPLLPLSVLSKCVSAYAGAKTEDHSNSDQKALGMMGLVRRDTALLLRDFRLGASSWLNSFLELSGRKSQKMSEPIAEPMRRSVSEAALAQPQGPLGTDSLKNLTLRDLSLRGNSETSSDTPEMSLSAETLSPSTPSDVNFLLPPEDAGEEAEAKNELSPMDRGLGVRAAFPEGFHPRRSSQGATQMPLYSSPIVKNPFMSPLLAPDSMLKSLPPVHIVACALDPMLDDSVMLARRLRNLGQPVTLRVVEDLPHGFLTLAALCRETRQAAELCVERIRLVLTPPAGAGPSGETGAAGVDGGCGGRH</sequence>
<evidence type="ECO:0000250" key="1">
    <source>
        <dbReference type="UniProtKB" id="P15304"/>
    </source>
</evidence>
<evidence type="ECO:0000250" key="2">
    <source>
        <dbReference type="UniProtKB" id="P16386"/>
    </source>
</evidence>
<evidence type="ECO:0000250" key="3">
    <source>
        <dbReference type="UniProtKB" id="P54310"/>
    </source>
</evidence>
<evidence type="ECO:0000250" key="4">
    <source>
        <dbReference type="UniProtKB" id="Q5NUF3"/>
    </source>
</evidence>
<evidence type="ECO:0000250" key="5">
    <source>
        <dbReference type="UniProtKB" id="Q8BLF1"/>
    </source>
</evidence>
<evidence type="ECO:0000255" key="6">
    <source>
        <dbReference type="PROSITE-ProRule" id="PRU10038"/>
    </source>
</evidence>
<evidence type="ECO:0000256" key="7">
    <source>
        <dbReference type="SAM" id="MobiDB-lite"/>
    </source>
</evidence>
<evidence type="ECO:0000269" key="8">
    <source>
    </source>
</evidence>
<evidence type="ECO:0000269" key="9">
    <source>
    </source>
</evidence>
<evidence type="ECO:0000269" key="10">
    <source>
    </source>
</evidence>
<evidence type="ECO:0000269" key="11">
    <source>
    </source>
</evidence>
<evidence type="ECO:0000269" key="12">
    <source>
    </source>
</evidence>
<evidence type="ECO:0000269" key="13">
    <source>
    </source>
</evidence>
<evidence type="ECO:0000269" key="14">
    <source>
    </source>
</evidence>
<evidence type="ECO:0000269" key="15">
    <source>
    </source>
</evidence>
<evidence type="ECO:0000269" key="16">
    <source ref="3"/>
</evidence>
<evidence type="ECO:0000303" key="17">
    <source>
    </source>
</evidence>
<evidence type="ECO:0000305" key="18"/>
<evidence type="ECO:0000305" key="19">
    <source>
    </source>
</evidence>
<evidence type="ECO:0000305" key="20">
    <source>
    </source>
</evidence>
<evidence type="ECO:0000305" key="21">
    <source>
    </source>
</evidence>
<reference key="1">
    <citation type="journal article" date="1993" name="Proc. Natl. Acad. Sci. U.S.A.">
        <title>Gene organization and primary structure of human hormone-sensitive lipase: possible significance of a sequence homology with a lipase of Moraxella TA144, an antarctic bacterium.</title>
        <authorList>
            <person name="Langin D."/>
            <person name="Laurell H."/>
            <person name="Stenson Holst L."/>
            <person name="Belfrage P."/>
            <person name="Holm C."/>
        </authorList>
    </citation>
    <scope>NUCLEOTIDE SEQUENCE [GENOMIC DNA]</scope>
</reference>
<reference key="2">
    <citation type="journal article" date="1996" name="Genomics">
        <title>Molecular cloning, genomic organization, and expression of a testicular isoform of hormone-sensitive lipase.</title>
        <authorList>
            <person name="Holst L.S."/>
            <person name="Langin D."/>
            <person name="Mulder H."/>
            <person name="Laurell H."/>
            <person name="Grober J."/>
            <person name="Bergh A."/>
            <person name="Mohrenweiser H.W."/>
            <person name="Edgren G."/>
            <person name="Holm C."/>
        </authorList>
    </citation>
    <scope>NUCLEOTIDE SEQUENCE [MRNA] (ISOFORM 1)</scope>
    <scope>FUNCTION</scope>
    <scope>CATALYTIC ACTIVITY</scope>
    <scope>TISSUE SPECIFICITY</scope>
    <source>
        <tissue>Testis</tissue>
    </source>
</reference>
<reference key="3">
    <citation type="submission" date="2005-08" db="EMBL/GenBank/DDBJ databases">
        <authorList>
            <consortium name="SeattleSNPs variation discovery resource"/>
        </authorList>
    </citation>
    <scope>NUCLEOTIDE SEQUENCE [GENOMIC DNA]</scope>
    <scope>VARIANTS HIS-100; HIS-127; SER-146; THR-177; VAL-194; GLN-217; ASN-497; HIS-499 AND SER-938</scope>
</reference>
<reference key="4">
    <citation type="journal article" date="2004" name="Genome Res.">
        <title>The status, quality, and expansion of the NIH full-length cDNA project: the Mammalian Gene Collection (MGC).</title>
        <authorList>
            <consortium name="The MGC Project Team"/>
        </authorList>
    </citation>
    <scope>NUCLEOTIDE SEQUENCE [LARGE SCALE MRNA] (ISOFORM 1)</scope>
    <source>
        <tissue>Testis</tissue>
    </source>
</reference>
<reference key="5">
    <citation type="journal article" date="2005" name="J. Invest. Dermatol.">
        <title>Identification of a novel keratinocyte retinyl ester hydrolase as a transacylase and lipase.</title>
        <authorList>
            <person name="Gao J."/>
            <person name="Simon M."/>
        </authorList>
    </citation>
    <scope>FUNCTION</scope>
    <scope>CATALYTIC ACTIVITY</scope>
    <scope>ACTIVITY REGULATION</scope>
</reference>
<reference key="6">
    <citation type="journal article" date="2005" name="J. Lipid Res.">
        <title>Continuous monitoring of cholesterol oleate hydrolysis by hormone-sensitive lipase and other cholesterol esterases.</title>
        <authorList>
            <person name="Ali Y.B."/>
            <person name="Carriere F."/>
            <person name="Verger R."/>
            <person name="Petry S."/>
            <person name="Muller G."/>
            <person name="Abousalham A."/>
        </authorList>
    </citation>
    <scope>FUNCTION</scope>
    <scope>CATALYTIC ACTIVITY</scope>
</reference>
<reference key="7">
    <citation type="journal article" date="2006" name="Biochem. Biophys. Res. Commun.">
        <title>Association and insulin regulated translocation of hormone-sensitive lipase with PTRF.</title>
        <authorList>
            <person name="Aboulaich N."/>
            <person name="Oertegren U."/>
            <person name="Vener A.V."/>
            <person name="Stralfors P."/>
        </authorList>
    </citation>
    <scope>INTERACTION WITH CAVIN1</scope>
    <scope>SUBCELLULAR LOCATION</scope>
</reference>
<reference key="8">
    <citation type="journal article" date="2006" name="FEBS J.">
        <title>Separation and characterization of caveolae subclasses in the plasma membrane of primary adipocytes; segregation of specific proteins and functions.</title>
        <authorList>
            <person name="Oertegren U."/>
            <person name="Yin L."/>
            <person name="Oest A."/>
            <person name="Karlsson H."/>
            <person name="Nystrom F.H."/>
            <person name="Stralfors P."/>
        </authorList>
    </citation>
    <scope>SUBCELLULAR LOCATION</scope>
</reference>
<reference key="9">
    <citation type="journal article" date="2009" name="Sci. Signal.">
        <title>Quantitative phosphoproteomic analysis of T cell receptor signaling reveals system-wide modulation of protein-protein interactions.</title>
        <authorList>
            <person name="Mayya V."/>
            <person name="Lundgren D.H."/>
            <person name="Hwang S.-I."/>
            <person name="Rezaul K."/>
            <person name="Wu L."/>
            <person name="Eng J.K."/>
            <person name="Rodionov V."/>
            <person name="Han D.K."/>
        </authorList>
    </citation>
    <scope>IDENTIFICATION BY MASS SPECTROMETRY [LARGE SCALE ANALYSIS]</scope>
    <source>
        <tissue>Leukemic T-cell</tissue>
    </source>
</reference>
<reference key="10">
    <citation type="journal article" date="2010" name="Biochim. Biophys. Acta">
        <title>In vitro stereoselective hydrolysis of diacylglycerols by hormone-sensitive lipase.</title>
        <authorList>
            <person name="Rodriguez J.A."/>
            <person name="Ben Ali Y."/>
            <person name="Abdelkafi S."/>
            <person name="Mendoza L.D."/>
            <person name="Leclaire J."/>
            <person name="Fotiadu F."/>
            <person name="Buono G."/>
            <person name="Carriere F."/>
            <person name="Abousalham A."/>
        </authorList>
    </citation>
    <scope>FUNCTION</scope>
    <scope>CATALYTIC ACTIVITY</scope>
</reference>
<reference key="11">
    <citation type="journal article" date="2014" name="N. Engl. J. Med.">
        <title>Null mutation in hormone-sensitive lipase gene and risk of type 2 diabetes.</title>
        <authorList>
            <person name="Albert J.S."/>
            <person name="Yerges-Armstrong L.M."/>
            <person name="Horenstein R.B."/>
            <person name="Pollin T.I."/>
            <person name="Sreenivasan U.T."/>
            <person name="Chai S."/>
            <person name="Blaner W.S."/>
            <person name="Snitker S."/>
            <person name="O'Connell J.R."/>
            <person name="Gong D.W."/>
            <person name="Breyer R.J."/>
            <person name="Ryan A.S."/>
            <person name="McLenithan J.C."/>
            <person name="Shuldiner A.R."/>
            <person name="Sztalryd C."/>
            <person name="Damcott C.M."/>
        </authorList>
    </citation>
    <scope>INVOLVEMENT IN FPLD6</scope>
</reference>
<reference key="12">
    <citation type="journal article" date="2006" name="Science">
        <title>The consensus coding sequences of human breast and colorectal cancers.</title>
        <authorList>
            <person name="Sjoeblom T."/>
            <person name="Jones S."/>
            <person name="Wood L.D."/>
            <person name="Parsons D.W."/>
            <person name="Lin J."/>
            <person name="Barber T.D."/>
            <person name="Mandelker D."/>
            <person name="Leary R.J."/>
            <person name="Ptak J."/>
            <person name="Silliman N."/>
            <person name="Szabo S."/>
            <person name="Buckhaults P."/>
            <person name="Farrell C."/>
            <person name="Meeh P."/>
            <person name="Markowitz S.D."/>
            <person name="Willis J."/>
            <person name="Dawson D."/>
            <person name="Willson J.K.V."/>
            <person name="Gazdar A.F."/>
            <person name="Hartigan J."/>
            <person name="Wu L."/>
            <person name="Liu C."/>
            <person name="Parmigiani G."/>
            <person name="Park B.H."/>
            <person name="Bachman K.E."/>
            <person name="Papadopoulos N."/>
            <person name="Vogelstein B."/>
            <person name="Kinzler K.W."/>
            <person name="Velculescu V.E."/>
        </authorList>
    </citation>
    <scope>VARIANT [LARGE SCALE ANALYSIS] GLN-146</scope>
</reference>
<protein>
    <recommendedName>
        <fullName>Hormone-sensitive lipase</fullName>
        <shortName>HSL</shortName>
        <ecNumber evidence="9 13 15">3.1.1.79</ecNumber>
    </recommendedName>
    <alternativeName>
        <fullName>Monoacylglycerol lipase LIPE</fullName>
        <ecNumber evidence="3">3.1.1.23</ecNumber>
    </alternativeName>
    <alternativeName>
        <fullName evidence="17">Retinyl ester hydrolase</fullName>
        <shortName>REH</shortName>
    </alternativeName>
</protein>
<proteinExistence type="evidence at protein level"/>
<accession>Q05469</accession>
<accession>Q3LRT2</accession>
<accession>Q6NSL7</accession>
<name>LIPS_HUMAN</name>
<keyword id="KW-0025">Alternative splicing</keyword>
<keyword id="KW-1003">Cell membrane</keyword>
<keyword id="KW-0153">Cholesterol metabolism</keyword>
<keyword id="KW-0963">Cytoplasm</keyword>
<keyword id="KW-0219">Diabetes mellitus</keyword>
<keyword id="KW-0378">Hydrolase</keyword>
<keyword id="KW-0442">Lipid degradation</keyword>
<keyword id="KW-0551">Lipid droplet</keyword>
<keyword id="KW-0443">Lipid metabolism</keyword>
<keyword id="KW-0472">Membrane</keyword>
<keyword id="KW-0550">Obesity</keyword>
<keyword id="KW-0597">Phosphoprotein</keyword>
<keyword id="KW-1267">Proteomics identification</keyword>
<keyword id="KW-1185">Reference proteome</keyword>
<keyword id="KW-0753">Steroid metabolism</keyword>
<keyword id="KW-1207">Sterol metabolism</keyword>
<comment type="function">
    <text evidence="1 3 8 9 13 15">Lipase with broad substrate specificity, catalyzing the hydrolysis of triacylglycerols (TAGs), diacylglycerols (DAGs), monoacylglycerols (MAGs), cholesteryl esters and retinyl esters (PubMed:15716583, PubMed:15955102, PubMed:19800417, PubMed:8812477). Shows a preferential hydrolysis of DAGs over TAGs and MAGs and preferentially hydrolyzes the fatty acid (FA) esters at the sn-3 position of the glycerol backbone in DAGs (PubMed:19800417). Preferentially hydrolyzes FA esters at the sn-1 and sn-2 positions of the glycerol backbone in TAGs (By similarity). Catalyzes the hydrolysis of 2-arachidonoylglycerol, an endocannabinoid and of 2-acetyl monoalkylglycerol ether, the penultimate precursor of the pathway for de novo synthesis of platelet-activating factor (By similarity). In adipose tissue and heart, it primarily hydrolyzes stored triglycerides to free fatty acids, while in steroidogenic tissues, it principally converts cholesteryl esters to free cholesterol for steroid hormone production (By similarity).</text>
</comment>
<comment type="catalytic activity">
    <reaction evidence="13 15">
        <text>a diacylglycerol + H2O = a monoacylglycerol + a fatty acid + H(+)</text>
        <dbReference type="Rhea" id="RHEA:32731"/>
        <dbReference type="ChEBI" id="CHEBI:15377"/>
        <dbReference type="ChEBI" id="CHEBI:15378"/>
        <dbReference type="ChEBI" id="CHEBI:17408"/>
        <dbReference type="ChEBI" id="CHEBI:18035"/>
        <dbReference type="ChEBI" id="CHEBI:28868"/>
        <dbReference type="EC" id="3.1.1.79"/>
    </reaction>
</comment>
<comment type="catalytic activity">
    <reaction evidence="9 13">
        <text>a triacylglycerol + H2O = a diacylglycerol + a fatty acid + H(+)</text>
        <dbReference type="Rhea" id="RHEA:12044"/>
        <dbReference type="ChEBI" id="CHEBI:15377"/>
        <dbReference type="ChEBI" id="CHEBI:15378"/>
        <dbReference type="ChEBI" id="CHEBI:17855"/>
        <dbReference type="ChEBI" id="CHEBI:18035"/>
        <dbReference type="ChEBI" id="CHEBI:28868"/>
        <dbReference type="EC" id="3.1.1.79"/>
    </reaction>
</comment>
<comment type="catalytic activity">
    <reaction evidence="1">
        <text>a monoacylglycerol + H2O = glycerol + a fatty acid + H(+)</text>
        <dbReference type="Rhea" id="RHEA:15245"/>
        <dbReference type="ChEBI" id="CHEBI:15377"/>
        <dbReference type="ChEBI" id="CHEBI:15378"/>
        <dbReference type="ChEBI" id="CHEBI:17408"/>
        <dbReference type="ChEBI" id="CHEBI:17754"/>
        <dbReference type="ChEBI" id="CHEBI:28868"/>
        <dbReference type="EC" id="3.1.1.79"/>
    </reaction>
</comment>
<comment type="catalytic activity">
    <reaction evidence="3">
        <text>Hydrolyzes glycerol monoesters of long-chain fatty acids.</text>
        <dbReference type="EC" id="3.1.1.23"/>
    </reaction>
</comment>
<comment type="catalytic activity">
    <reaction evidence="13">
        <text>1,2-di-(9Z-octadecenoyl)-glycerol + (9Z)-octadecenoate + H(+) = 1,2,3-tri-(9Z-octadecenoyl)-glycerol + H2O</text>
        <dbReference type="Rhea" id="RHEA:38379"/>
        <dbReference type="ChEBI" id="CHEBI:15377"/>
        <dbReference type="ChEBI" id="CHEBI:15378"/>
        <dbReference type="ChEBI" id="CHEBI:30823"/>
        <dbReference type="ChEBI" id="CHEBI:52323"/>
        <dbReference type="ChEBI" id="CHEBI:53753"/>
    </reaction>
    <physiologicalReaction direction="right-to-left" evidence="21">
        <dbReference type="Rhea" id="RHEA:38381"/>
    </physiologicalReaction>
</comment>
<comment type="catalytic activity">
    <reaction evidence="13">
        <text>2,3-di-(9Z)-octadecenoyl-sn-glycerol + H2O = 2-(9Z-octadecenoyl)-glycerol + (9Z)-octadecenoate + H(+)</text>
        <dbReference type="Rhea" id="RHEA:38383"/>
        <dbReference type="ChEBI" id="CHEBI:15377"/>
        <dbReference type="ChEBI" id="CHEBI:15378"/>
        <dbReference type="ChEBI" id="CHEBI:30823"/>
        <dbReference type="ChEBI" id="CHEBI:73990"/>
        <dbReference type="ChEBI" id="CHEBI:75824"/>
    </reaction>
    <physiologicalReaction direction="left-to-right" evidence="21">
        <dbReference type="Rhea" id="RHEA:38384"/>
    </physiologicalReaction>
</comment>
<comment type="catalytic activity">
    <reaction evidence="8">
        <text>cholesteryl (9Z-octadecenoate) + H2O = cholesterol + (9Z)-octadecenoate + H(+)</text>
        <dbReference type="Rhea" id="RHEA:33875"/>
        <dbReference type="ChEBI" id="CHEBI:15377"/>
        <dbReference type="ChEBI" id="CHEBI:15378"/>
        <dbReference type="ChEBI" id="CHEBI:16113"/>
        <dbReference type="ChEBI" id="CHEBI:30823"/>
        <dbReference type="ChEBI" id="CHEBI:46898"/>
    </reaction>
    <physiologicalReaction direction="left-to-right" evidence="19">
        <dbReference type="Rhea" id="RHEA:33876"/>
    </physiologicalReaction>
</comment>
<comment type="catalytic activity">
    <reaction evidence="9">
        <text>1,2,3-tri-(9Z-octadecenoyl)-glycerol + H2O = di-(9Z)-octadecenoylglycerol + (9Z)-octadecenoate + H(+)</text>
        <dbReference type="Rhea" id="RHEA:38575"/>
        <dbReference type="ChEBI" id="CHEBI:15377"/>
        <dbReference type="ChEBI" id="CHEBI:15378"/>
        <dbReference type="ChEBI" id="CHEBI:30823"/>
        <dbReference type="ChEBI" id="CHEBI:53753"/>
        <dbReference type="ChEBI" id="CHEBI:75945"/>
    </reaction>
    <physiologicalReaction direction="left-to-right" evidence="20">
        <dbReference type="Rhea" id="RHEA:38576"/>
    </physiologicalReaction>
</comment>
<comment type="catalytic activity">
    <reaction evidence="9">
        <text>all-trans-retinyl hexadecanoate + H2O = all-trans-retinol + hexadecanoate + H(+)</text>
        <dbReference type="Rhea" id="RHEA:13933"/>
        <dbReference type="ChEBI" id="CHEBI:7896"/>
        <dbReference type="ChEBI" id="CHEBI:15377"/>
        <dbReference type="ChEBI" id="CHEBI:15378"/>
        <dbReference type="ChEBI" id="CHEBI:17336"/>
        <dbReference type="ChEBI" id="CHEBI:17616"/>
    </reaction>
    <physiologicalReaction direction="left-to-right" evidence="20">
        <dbReference type="Rhea" id="RHEA:13934"/>
    </physiologicalReaction>
</comment>
<comment type="catalytic activity">
    <reaction evidence="3">
        <text>1,2-di-(9Z-octadecenoyl)-glycerol + H2O = (9Z-octadecenoyl)-glycerol + (9Z)-octadecenoate + H(+)</text>
        <dbReference type="Rhea" id="RHEA:38455"/>
        <dbReference type="ChEBI" id="CHEBI:15377"/>
        <dbReference type="ChEBI" id="CHEBI:15378"/>
        <dbReference type="ChEBI" id="CHEBI:30823"/>
        <dbReference type="ChEBI" id="CHEBI:52323"/>
        <dbReference type="ChEBI" id="CHEBI:75937"/>
    </reaction>
    <physiologicalReaction direction="left-to-right" evidence="3">
        <dbReference type="Rhea" id="RHEA:38456"/>
    </physiologicalReaction>
</comment>
<comment type="catalytic activity">
    <reaction evidence="3">
        <text>2-(5Z,8Z,11Z,14Z-eicosatetraenoyl)-glycerol + H2O = glycerol + (5Z,8Z,11Z,14Z)-eicosatetraenoate + H(+)</text>
        <dbReference type="Rhea" id="RHEA:26132"/>
        <dbReference type="ChEBI" id="CHEBI:15377"/>
        <dbReference type="ChEBI" id="CHEBI:15378"/>
        <dbReference type="ChEBI" id="CHEBI:17754"/>
        <dbReference type="ChEBI" id="CHEBI:32395"/>
        <dbReference type="ChEBI" id="CHEBI:52392"/>
    </reaction>
    <physiologicalReaction direction="left-to-right" evidence="3">
        <dbReference type="Rhea" id="RHEA:26133"/>
    </physiologicalReaction>
</comment>
<comment type="catalytic activity">
    <reaction evidence="3">
        <text>1-(9Z-octadecenoyl)-glycerol + H2O = glycerol + (9Z)-octadecenoate + H(+)</text>
        <dbReference type="Rhea" id="RHEA:38487"/>
        <dbReference type="ChEBI" id="CHEBI:15377"/>
        <dbReference type="ChEBI" id="CHEBI:15378"/>
        <dbReference type="ChEBI" id="CHEBI:17754"/>
        <dbReference type="ChEBI" id="CHEBI:30823"/>
        <dbReference type="ChEBI" id="CHEBI:75342"/>
    </reaction>
    <physiologicalReaction direction="left-to-right" evidence="3">
        <dbReference type="Rhea" id="RHEA:38488"/>
    </physiologicalReaction>
</comment>
<comment type="catalytic activity">
    <reaction evidence="3">
        <text>2-(9Z-octadecenoyl)-glycerol + H2O = glycerol + (9Z)-octadecenoate + H(+)</text>
        <dbReference type="Rhea" id="RHEA:38491"/>
        <dbReference type="ChEBI" id="CHEBI:15377"/>
        <dbReference type="ChEBI" id="CHEBI:15378"/>
        <dbReference type="ChEBI" id="CHEBI:17754"/>
        <dbReference type="ChEBI" id="CHEBI:30823"/>
        <dbReference type="ChEBI" id="CHEBI:73990"/>
    </reaction>
    <physiologicalReaction direction="left-to-right" evidence="3">
        <dbReference type="Rhea" id="RHEA:38492"/>
    </physiologicalReaction>
</comment>
<comment type="catalytic activity">
    <reaction evidence="3">
        <text>1-O-hexadecyl-2-acetyl-sn-glycerol + H2O = 1-O-hexadecyl-sn-glycerol + acetate + H(+)</text>
        <dbReference type="Rhea" id="RHEA:38563"/>
        <dbReference type="ChEBI" id="CHEBI:15377"/>
        <dbReference type="ChEBI" id="CHEBI:15378"/>
        <dbReference type="ChEBI" id="CHEBI:30089"/>
        <dbReference type="ChEBI" id="CHEBI:34115"/>
        <dbReference type="ChEBI" id="CHEBI:75936"/>
    </reaction>
    <physiologicalReaction direction="left-to-right" evidence="3">
        <dbReference type="Rhea" id="RHEA:38564"/>
    </physiologicalReaction>
</comment>
<comment type="catalytic activity">
    <reaction evidence="3">
        <text>1,2-di-(9Z-octadecenoyl)-sn-glycerol + H2O = (9Z-octadecenoyl)-glycerol + (9Z)-octadecenoate + H(+)</text>
        <dbReference type="Rhea" id="RHEA:39935"/>
        <dbReference type="ChEBI" id="CHEBI:15377"/>
        <dbReference type="ChEBI" id="CHEBI:15378"/>
        <dbReference type="ChEBI" id="CHEBI:30823"/>
        <dbReference type="ChEBI" id="CHEBI:52333"/>
        <dbReference type="ChEBI" id="CHEBI:75937"/>
    </reaction>
    <physiologicalReaction direction="left-to-right" evidence="3">
        <dbReference type="Rhea" id="RHEA:39936"/>
    </physiologicalReaction>
</comment>
<comment type="catalytic activity">
    <reaction evidence="3">
        <text>1,3-di-(9Z-octadecenoyl)-glycerol + H2O = 1-(9Z-octadecenoyl)-glycerol + (9Z)-octadecenoate + H(+)</text>
        <dbReference type="Rhea" id="RHEA:39939"/>
        <dbReference type="ChEBI" id="CHEBI:15377"/>
        <dbReference type="ChEBI" id="CHEBI:15378"/>
        <dbReference type="ChEBI" id="CHEBI:30823"/>
        <dbReference type="ChEBI" id="CHEBI:75342"/>
        <dbReference type="ChEBI" id="CHEBI:75735"/>
    </reaction>
    <physiologicalReaction direction="left-to-right" evidence="3">
        <dbReference type="Rhea" id="RHEA:39940"/>
    </physiologicalReaction>
</comment>
<comment type="catalytic activity">
    <reaction evidence="1">
        <text>1,2-di-(9Z-octadecenoyl)-glycerol + H2O = 2-(9Z-octadecenoyl)-glycerol + (9Z)-octadecenoate + H(+)</text>
        <dbReference type="Rhea" id="RHEA:38659"/>
        <dbReference type="ChEBI" id="CHEBI:15377"/>
        <dbReference type="ChEBI" id="CHEBI:15378"/>
        <dbReference type="ChEBI" id="CHEBI:30823"/>
        <dbReference type="ChEBI" id="CHEBI:52323"/>
        <dbReference type="ChEBI" id="CHEBI:73990"/>
    </reaction>
    <physiologicalReaction direction="left-to-right" evidence="1">
        <dbReference type="Rhea" id="RHEA:38660"/>
    </physiologicalReaction>
</comment>
<comment type="activity regulation">
    <text evidence="9">Retinyl ester hydrolase is inhibited by bis-p-nitrophenyl phosphate.</text>
</comment>
<comment type="pathway">
    <text>Glycerolipid metabolism; triacylglycerol degradation.</text>
</comment>
<comment type="subunit">
    <text evidence="1 3 12">Monomer and homodimer (By similarity). Interacts with CAVIN1 in the adipocyte cytoplasm (PubMed:17026959). Interacts with PLIN5 (By similarity).</text>
</comment>
<comment type="interaction">
    <interactant intactId="EBI-721601">
        <id>Q05469</id>
    </interactant>
    <interactant intactId="EBI-10241197">
        <id>Q3SY00</id>
        <label>TSGA10IP</label>
    </interactant>
    <organismsDiffer>false</organismsDiffer>
    <experiments>3</experiments>
</comment>
<comment type="subcellular location">
    <subcellularLocation>
        <location evidence="12">Cell membrane</location>
    </subcellularLocation>
    <subcellularLocation>
        <location evidence="10 12">Membrane</location>
        <location evidence="10 12">Caveola</location>
    </subcellularLocation>
    <subcellularLocation>
        <location evidence="12">Cytoplasm</location>
        <location evidence="12">Cytosol</location>
    </subcellularLocation>
    <subcellularLocation>
        <location evidence="3">Lipid droplet</location>
    </subcellularLocation>
    <text evidence="3 12">Found in the high-density caveolae. Translocates to the cytoplasm from the caveolae upon insulin stimulation (PubMed:17026959). Phosphorylation by AMPK reduces its translocation towards the lipid droplets (By similarity).</text>
</comment>
<comment type="alternative products">
    <event type="alternative splicing"/>
    <isoform>
        <id>Q05469-1</id>
        <name>1</name>
        <name>Testicular</name>
        <sequence type="displayed"/>
    </isoform>
    <isoform>
        <id>Q05469-2</id>
        <name>2</name>
        <sequence type="described" ref="VSP_017116"/>
    </isoform>
</comment>
<comment type="tissue specificity">
    <text evidence="15">Testis.</text>
</comment>
<comment type="PTM">
    <text evidence="3">Phosphorylation by AMPK reduces its translocation towards the lipid droplets.</text>
</comment>
<comment type="disease" evidence="14">
    <disease id="DI-04219">
        <name>Lipodystrophy, familial partial, 6</name>
        <acronym>FPLD6</acronym>
        <description>A form of lipodystrophy characterized by abnormal subcutaneous fat distribution. Affected individuals have increased visceral fat, impaired lipolysis, dyslipidemia, hepatic steatosis, systemic insulin resistance, and diabetes. Some patients manifest muscular dystrophy.</description>
        <dbReference type="MIM" id="615980"/>
    </disease>
    <text>The disease is caused by variants affecting the gene represented in this entry.</text>
</comment>
<comment type="similarity">
    <text evidence="18">Belongs to the 'GDXG' lipolytic enzyme family.</text>
</comment>
<gene>
    <name type="primary">LIPE</name>
</gene>
<feature type="chain" id="PRO_0000071547" description="Hormone-sensitive lipase">
    <location>
        <begin position="1"/>
        <end position="1076"/>
    </location>
</feature>
<feature type="region of interest" description="Disordered" evidence="7">
    <location>
        <begin position="1"/>
        <end position="198"/>
    </location>
</feature>
<feature type="region of interest" description="Disordered" evidence="7">
    <location>
        <begin position="229"/>
        <end position="250"/>
    </location>
</feature>
<feature type="region of interest" description="Disordered" evidence="7">
    <location>
        <begin position="838"/>
        <end position="930"/>
    </location>
</feature>
<feature type="region of interest" description="Disordered" evidence="7">
    <location>
        <begin position="1055"/>
        <end position="1076"/>
    </location>
</feature>
<feature type="short sequence motif" description="Involved in the stabilization of the negatively charged intermediate by the formation of the oxyanion hole" evidence="4">
    <location>
        <begin position="651"/>
        <end position="653"/>
    </location>
</feature>
<feature type="compositionally biased region" description="Polar residues" evidence="7">
    <location>
        <begin position="1"/>
        <end position="12"/>
    </location>
</feature>
<feature type="compositionally biased region" description="Polar residues" evidence="7">
    <location>
        <begin position="38"/>
        <end position="64"/>
    </location>
</feature>
<feature type="compositionally biased region" description="Basic and acidic residues" evidence="7">
    <location>
        <begin position="65"/>
        <end position="77"/>
    </location>
</feature>
<feature type="compositionally biased region" description="Polar residues" evidence="7">
    <location>
        <begin position="94"/>
        <end position="116"/>
    </location>
</feature>
<feature type="compositionally biased region" description="Pro residues" evidence="7">
    <location>
        <begin position="140"/>
        <end position="149"/>
    </location>
</feature>
<feature type="compositionally biased region" description="Low complexity" evidence="7">
    <location>
        <begin position="150"/>
        <end position="161"/>
    </location>
</feature>
<feature type="compositionally biased region" description="Polar residues" evidence="7">
    <location>
        <begin position="172"/>
        <end position="198"/>
    </location>
</feature>
<feature type="compositionally biased region" description="Low complexity" evidence="7">
    <location>
        <begin position="237"/>
        <end position="246"/>
    </location>
</feature>
<feature type="compositionally biased region" description="Polar residues" evidence="7">
    <location>
        <begin position="882"/>
        <end position="908"/>
    </location>
</feature>
<feature type="compositionally biased region" description="Gly residues" evidence="7">
    <location>
        <begin position="1067"/>
        <end position="1076"/>
    </location>
</feature>
<feature type="active site" evidence="5 6">
    <location>
        <position position="725"/>
    </location>
</feature>
<feature type="active site" evidence="5">
    <location>
        <position position="994"/>
    </location>
</feature>
<feature type="active site" evidence="5">
    <location>
        <position position="1024"/>
    </location>
</feature>
<feature type="modified residue" description="Phosphoserine" evidence="2">
    <location>
        <position position="853"/>
    </location>
</feature>
<feature type="modified residue" description="Phosphoserine; by AMPK" evidence="2">
    <location>
        <position position="855"/>
    </location>
</feature>
<feature type="modified residue" description="Phosphoserine" evidence="1">
    <location>
        <position position="897"/>
    </location>
</feature>
<feature type="modified residue" description="Phosphoserine" evidence="1">
    <location>
        <position position="929"/>
    </location>
</feature>
<feature type="modified residue" description="Phosphoserine" evidence="1">
    <location>
        <position position="950"/>
    </location>
</feature>
<feature type="modified residue" description="Phosphoserine" evidence="1">
    <location>
        <position position="951"/>
    </location>
</feature>
<feature type="splice variant" id="VSP_017116" description="In isoform 2." evidence="18">
    <location>
        <begin position="1"/>
        <end position="301"/>
    </location>
</feature>
<feature type="sequence variant" id="VAR_025108" description="In dbSNP:rs16975750." evidence="16">
    <original>Y</original>
    <variation>H</variation>
    <location>
        <position position="100"/>
    </location>
</feature>
<feature type="sequence variant" id="VAR_025109" description="In dbSNP:rs34080774." evidence="16">
    <original>Q</original>
    <variation>H</variation>
    <location>
        <position position="127"/>
    </location>
</feature>
<feature type="sequence variant" id="VAR_036539" description="In a breast cancer sample; somatic mutation." evidence="11">
    <original>P</original>
    <variation>Q</variation>
    <location>
        <position position="146"/>
    </location>
</feature>
<feature type="sequence variant" id="VAR_025110" description="In dbSNP:rs34348028." evidence="16">
    <original>P</original>
    <variation>S</variation>
    <location>
        <position position="146"/>
    </location>
</feature>
<feature type="sequence variant" id="VAR_025111" description="In dbSNP:rs16975748." evidence="16">
    <original>S</original>
    <variation>T</variation>
    <location>
        <position position="177"/>
    </location>
</feature>
<feature type="sequence variant" id="VAR_025112" description="In dbSNP:rs34996020." evidence="16">
    <original>A</original>
    <variation>V</variation>
    <location>
        <position position="194"/>
    </location>
</feature>
<feature type="sequence variant" id="VAR_025113" description="In dbSNP:rs3745238." evidence="16">
    <original>R</original>
    <variation>Q</variation>
    <location>
        <position position="217"/>
    </location>
</feature>
<feature type="sequence variant" id="VAR_025114" description="In dbSNP:rs35938529." evidence="16">
    <original>K</original>
    <variation>N</variation>
    <location>
        <position position="497"/>
    </location>
</feature>
<feature type="sequence variant" id="VAR_025115" description="In dbSNP:rs33921216." evidence="16">
    <original>N</original>
    <variation>H</variation>
    <location>
        <position position="499"/>
    </location>
</feature>
<feature type="sequence variant" id="VAR_025116" description="In dbSNP:rs7246232." evidence="16">
    <original>R</original>
    <variation>S</variation>
    <location>
        <position position="938"/>
    </location>
</feature>
<feature type="sequence conflict" description="In Ref. 1; AAA69810, 2; AAC50666 and 3; ABA03168." evidence="18" ref="1 2 3">
    <original>T</original>
    <variation>A</variation>
    <location>
        <position position="230"/>
    </location>
</feature>
<feature type="sequence conflict" description="In Ref. 4; AAH70041." evidence="18" ref="4">
    <original>S</original>
    <variation>Y</variation>
    <location>
        <position position="486"/>
    </location>
</feature>
<feature type="sequence conflict" description="In Ref. 4; AAH70041." evidence="18" ref="4">
    <original>Y</original>
    <variation>C</variation>
    <location>
        <position position="608"/>
    </location>
</feature>